<keyword id="KW-0997">Cell inner membrane</keyword>
<keyword id="KW-1003">Cell membrane</keyword>
<keyword id="KW-0169">Cobalamin biosynthesis</keyword>
<keyword id="KW-0460">Magnesium</keyword>
<keyword id="KW-0472">Membrane</keyword>
<keyword id="KW-1185">Reference proteome</keyword>
<keyword id="KW-0808">Transferase</keyword>
<keyword id="KW-0812">Transmembrane</keyword>
<keyword id="KW-1133">Transmembrane helix</keyword>
<gene>
    <name evidence="1" type="primary">cobS</name>
    <name type="ordered locus">EC55989_2226</name>
</gene>
<accession>B7L917</accession>
<sequence length="247" mass="26396">MSKLFWAMLSFITRLPVPRRWSQGLDFEHYSRGIITFPLIGLLLGAISGLVFMVLQAWCGVPLAALFSVLVLALMTGGFHLDGLADTCDGVFSARSRDRMLEIMRDSRLGTHGGLALIFVVLAKILVLSELALRGEPILASLAAACAVSRGTAALLMYRHRYAREEGLGNVFIGKIDGRQTCVTLGLAAIFAAVLLPGMHGVAAMVVTMVAIFILGQLLKRTLGGQTGDTLGAAIELGELVFLLALL</sequence>
<organism>
    <name type="scientific">Escherichia coli (strain 55989 / EAEC)</name>
    <dbReference type="NCBI Taxonomy" id="585055"/>
    <lineage>
        <taxon>Bacteria</taxon>
        <taxon>Pseudomonadati</taxon>
        <taxon>Pseudomonadota</taxon>
        <taxon>Gammaproteobacteria</taxon>
        <taxon>Enterobacterales</taxon>
        <taxon>Enterobacteriaceae</taxon>
        <taxon>Escherichia</taxon>
    </lineage>
</organism>
<comment type="function">
    <text evidence="1">Joins adenosylcobinamide-GDP and alpha-ribazole to generate adenosylcobalamin (Ado-cobalamin). Also synthesizes adenosylcobalamin 5'-phosphate from adenosylcobinamide-GDP and alpha-ribazole 5'-phosphate.</text>
</comment>
<comment type="catalytic activity">
    <reaction evidence="1">
        <text>alpha-ribazole + adenosylcob(III)inamide-GDP = adenosylcob(III)alamin + GMP + H(+)</text>
        <dbReference type="Rhea" id="RHEA:16049"/>
        <dbReference type="ChEBI" id="CHEBI:10329"/>
        <dbReference type="ChEBI" id="CHEBI:15378"/>
        <dbReference type="ChEBI" id="CHEBI:18408"/>
        <dbReference type="ChEBI" id="CHEBI:58115"/>
        <dbReference type="ChEBI" id="CHEBI:60487"/>
        <dbReference type="EC" id="2.7.8.26"/>
    </reaction>
</comment>
<comment type="catalytic activity">
    <reaction evidence="1">
        <text>alpha-ribazole 5'-phosphate + adenosylcob(III)inamide-GDP = adenosylcob(III)alamin 5'-phosphate + GMP + H(+)</text>
        <dbReference type="Rhea" id="RHEA:23560"/>
        <dbReference type="ChEBI" id="CHEBI:15378"/>
        <dbReference type="ChEBI" id="CHEBI:57918"/>
        <dbReference type="ChEBI" id="CHEBI:58115"/>
        <dbReference type="ChEBI" id="CHEBI:60487"/>
        <dbReference type="ChEBI" id="CHEBI:60493"/>
        <dbReference type="EC" id="2.7.8.26"/>
    </reaction>
</comment>
<comment type="cofactor">
    <cofactor evidence="1">
        <name>Mg(2+)</name>
        <dbReference type="ChEBI" id="CHEBI:18420"/>
    </cofactor>
</comment>
<comment type="pathway">
    <text evidence="1">Cofactor biosynthesis; adenosylcobalamin biosynthesis; adenosylcobalamin from cob(II)yrinate a,c-diamide: step 7/7.</text>
</comment>
<comment type="subcellular location">
    <subcellularLocation>
        <location evidence="1">Cell inner membrane</location>
        <topology evidence="1">Multi-pass membrane protein</topology>
    </subcellularLocation>
</comment>
<comment type="similarity">
    <text evidence="1">Belongs to the CobS family.</text>
</comment>
<protein>
    <recommendedName>
        <fullName evidence="1">Adenosylcobinamide-GDP ribazoletransferase</fullName>
        <ecNumber evidence="1">2.7.8.26</ecNumber>
    </recommendedName>
    <alternativeName>
        <fullName evidence="1">Cobalamin synthase</fullName>
    </alternativeName>
    <alternativeName>
        <fullName evidence="1">Cobalamin-5'-phosphate synthase</fullName>
    </alternativeName>
</protein>
<dbReference type="EC" id="2.7.8.26" evidence="1"/>
<dbReference type="EMBL" id="CU928145">
    <property type="protein sequence ID" value="CAU98099.1"/>
    <property type="molecule type" value="Genomic_DNA"/>
</dbReference>
<dbReference type="RefSeq" id="WP_001297350.1">
    <property type="nucleotide sequence ID" value="NC_011748.1"/>
</dbReference>
<dbReference type="GeneID" id="93775192"/>
<dbReference type="KEGG" id="eck:EC55989_2226"/>
<dbReference type="HOGENOM" id="CLU_057426_1_1_6"/>
<dbReference type="UniPathway" id="UPA00148">
    <property type="reaction ID" value="UER00238"/>
</dbReference>
<dbReference type="Proteomes" id="UP000000746">
    <property type="component" value="Chromosome"/>
</dbReference>
<dbReference type="GO" id="GO:0005886">
    <property type="term" value="C:plasma membrane"/>
    <property type="evidence" value="ECO:0007669"/>
    <property type="project" value="UniProtKB-SubCell"/>
</dbReference>
<dbReference type="GO" id="GO:0051073">
    <property type="term" value="F:adenosylcobinamide-GDP ribazoletransferase activity"/>
    <property type="evidence" value="ECO:0007669"/>
    <property type="project" value="UniProtKB-UniRule"/>
</dbReference>
<dbReference type="GO" id="GO:0008818">
    <property type="term" value="F:cobalamin 5'-phosphate synthase activity"/>
    <property type="evidence" value="ECO:0007669"/>
    <property type="project" value="UniProtKB-UniRule"/>
</dbReference>
<dbReference type="GO" id="GO:0009236">
    <property type="term" value="P:cobalamin biosynthetic process"/>
    <property type="evidence" value="ECO:0007669"/>
    <property type="project" value="UniProtKB-UniRule"/>
</dbReference>
<dbReference type="HAMAP" id="MF_00719">
    <property type="entry name" value="CobS"/>
    <property type="match status" value="1"/>
</dbReference>
<dbReference type="InterPro" id="IPR003805">
    <property type="entry name" value="CobS"/>
</dbReference>
<dbReference type="NCBIfam" id="TIGR00317">
    <property type="entry name" value="cobS"/>
    <property type="match status" value="1"/>
</dbReference>
<dbReference type="PANTHER" id="PTHR34148">
    <property type="entry name" value="ADENOSYLCOBINAMIDE-GDP RIBAZOLETRANSFERASE"/>
    <property type="match status" value="1"/>
</dbReference>
<dbReference type="PANTHER" id="PTHR34148:SF1">
    <property type="entry name" value="ADENOSYLCOBINAMIDE-GDP RIBAZOLETRANSFERASE"/>
    <property type="match status" value="1"/>
</dbReference>
<dbReference type="Pfam" id="PF02654">
    <property type="entry name" value="CobS"/>
    <property type="match status" value="1"/>
</dbReference>
<proteinExistence type="inferred from homology"/>
<feature type="chain" id="PRO_1000148022" description="Adenosylcobinamide-GDP ribazoletransferase">
    <location>
        <begin position="1"/>
        <end position="247"/>
    </location>
</feature>
<feature type="transmembrane region" description="Helical" evidence="1">
    <location>
        <begin position="34"/>
        <end position="54"/>
    </location>
</feature>
<feature type="transmembrane region" description="Helical" evidence="1">
    <location>
        <begin position="59"/>
        <end position="79"/>
    </location>
</feature>
<feature type="transmembrane region" description="Helical" evidence="1">
    <location>
        <begin position="113"/>
        <end position="133"/>
    </location>
</feature>
<feature type="transmembrane region" description="Helical" evidence="1">
    <location>
        <begin position="138"/>
        <end position="158"/>
    </location>
</feature>
<feature type="transmembrane region" description="Helical" evidence="1">
    <location>
        <begin position="194"/>
        <end position="214"/>
    </location>
</feature>
<evidence type="ECO:0000255" key="1">
    <source>
        <dbReference type="HAMAP-Rule" id="MF_00719"/>
    </source>
</evidence>
<name>COBS_ECO55</name>
<reference key="1">
    <citation type="journal article" date="2009" name="PLoS Genet.">
        <title>Organised genome dynamics in the Escherichia coli species results in highly diverse adaptive paths.</title>
        <authorList>
            <person name="Touchon M."/>
            <person name="Hoede C."/>
            <person name="Tenaillon O."/>
            <person name="Barbe V."/>
            <person name="Baeriswyl S."/>
            <person name="Bidet P."/>
            <person name="Bingen E."/>
            <person name="Bonacorsi S."/>
            <person name="Bouchier C."/>
            <person name="Bouvet O."/>
            <person name="Calteau A."/>
            <person name="Chiapello H."/>
            <person name="Clermont O."/>
            <person name="Cruveiller S."/>
            <person name="Danchin A."/>
            <person name="Diard M."/>
            <person name="Dossat C."/>
            <person name="Karoui M.E."/>
            <person name="Frapy E."/>
            <person name="Garry L."/>
            <person name="Ghigo J.M."/>
            <person name="Gilles A.M."/>
            <person name="Johnson J."/>
            <person name="Le Bouguenec C."/>
            <person name="Lescat M."/>
            <person name="Mangenot S."/>
            <person name="Martinez-Jehanne V."/>
            <person name="Matic I."/>
            <person name="Nassif X."/>
            <person name="Oztas S."/>
            <person name="Petit M.A."/>
            <person name="Pichon C."/>
            <person name="Rouy Z."/>
            <person name="Ruf C.S."/>
            <person name="Schneider D."/>
            <person name="Tourret J."/>
            <person name="Vacherie B."/>
            <person name="Vallenet D."/>
            <person name="Medigue C."/>
            <person name="Rocha E.P.C."/>
            <person name="Denamur E."/>
        </authorList>
    </citation>
    <scope>NUCLEOTIDE SEQUENCE [LARGE SCALE GENOMIC DNA]</scope>
    <source>
        <strain>55989 / EAEC</strain>
    </source>
</reference>